<proteinExistence type="inferred from homology"/>
<comment type="function">
    <text evidence="2">GTP hydrolase that promotes the GTP-dependent binding of aminoacyl-tRNA to the A-site of ribosomes during protein biosynthesis.</text>
</comment>
<comment type="catalytic activity">
    <reaction evidence="2">
        <text>GTP + H2O = GDP + phosphate + H(+)</text>
        <dbReference type="Rhea" id="RHEA:19669"/>
        <dbReference type="ChEBI" id="CHEBI:15377"/>
        <dbReference type="ChEBI" id="CHEBI:15378"/>
        <dbReference type="ChEBI" id="CHEBI:37565"/>
        <dbReference type="ChEBI" id="CHEBI:43474"/>
        <dbReference type="ChEBI" id="CHEBI:58189"/>
        <dbReference type="EC" id="3.6.5.3"/>
    </reaction>
    <physiologicalReaction direction="left-to-right" evidence="2">
        <dbReference type="Rhea" id="RHEA:19670"/>
    </physiologicalReaction>
</comment>
<comment type="subunit">
    <text evidence="2">Monomer.</text>
</comment>
<comment type="subcellular location">
    <subcellularLocation>
        <location evidence="2">Cytoplasm</location>
    </subcellularLocation>
</comment>
<comment type="similarity">
    <text evidence="2">Belongs to the TRAFAC class translation factor GTPase superfamily. Classic translation factor GTPase family. EF-Tu/EF-1A subfamily.</text>
</comment>
<gene>
    <name evidence="2" type="primary">tuf</name>
    <name type="ordered locus">MAE_42760</name>
</gene>
<dbReference type="EC" id="3.6.5.3" evidence="2"/>
<dbReference type="EMBL" id="AP009552">
    <property type="protein sequence ID" value="BAG04098.1"/>
    <property type="molecule type" value="Genomic_DNA"/>
</dbReference>
<dbReference type="RefSeq" id="WP_004162845.1">
    <property type="nucleotide sequence ID" value="NC_010296.1"/>
</dbReference>
<dbReference type="SMR" id="B0JSE0"/>
<dbReference type="STRING" id="449447.MAE_42760"/>
<dbReference type="PaxDb" id="449447-MAE_42760"/>
<dbReference type="EnsemblBacteria" id="BAG04098">
    <property type="protein sequence ID" value="BAG04098"/>
    <property type="gene ID" value="MAE_42760"/>
</dbReference>
<dbReference type="KEGG" id="mar:MAE_42760"/>
<dbReference type="eggNOG" id="COG0050">
    <property type="taxonomic scope" value="Bacteria"/>
</dbReference>
<dbReference type="HOGENOM" id="CLU_007265_0_0_3"/>
<dbReference type="BioCyc" id="MAER449447:MAE_RS18555-MONOMER"/>
<dbReference type="Proteomes" id="UP000001510">
    <property type="component" value="Chromosome"/>
</dbReference>
<dbReference type="GO" id="GO:0005829">
    <property type="term" value="C:cytosol"/>
    <property type="evidence" value="ECO:0007669"/>
    <property type="project" value="TreeGrafter"/>
</dbReference>
<dbReference type="GO" id="GO:0005525">
    <property type="term" value="F:GTP binding"/>
    <property type="evidence" value="ECO:0007669"/>
    <property type="project" value="UniProtKB-UniRule"/>
</dbReference>
<dbReference type="GO" id="GO:0003924">
    <property type="term" value="F:GTPase activity"/>
    <property type="evidence" value="ECO:0007669"/>
    <property type="project" value="InterPro"/>
</dbReference>
<dbReference type="GO" id="GO:0003746">
    <property type="term" value="F:translation elongation factor activity"/>
    <property type="evidence" value="ECO:0007669"/>
    <property type="project" value="UniProtKB-UniRule"/>
</dbReference>
<dbReference type="CDD" id="cd01884">
    <property type="entry name" value="EF_Tu"/>
    <property type="match status" value="1"/>
</dbReference>
<dbReference type="CDD" id="cd03697">
    <property type="entry name" value="EFTU_II"/>
    <property type="match status" value="1"/>
</dbReference>
<dbReference type="CDD" id="cd03707">
    <property type="entry name" value="EFTU_III"/>
    <property type="match status" value="1"/>
</dbReference>
<dbReference type="FunFam" id="2.40.30.10:FF:000001">
    <property type="entry name" value="Elongation factor Tu"/>
    <property type="match status" value="1"/>
</dbReference>
<dbReference type="FunFam" id="2.40.30.10:FF:000046">
    <property type="entry name" value="Elongation factor Tu"/>
    <property type="match status" value="1"/>
</dbReference>
<dbReference type="FunFam" id="3.40.50.300:FF:000003">
    <property type="entry name" value="Elongation factor Tu"/>
    <property type="match status" value="1"/>
</dbReference>
<dbReference type="Gene3D" id="3.40.50.300">
    <property type="entry name" value="P-loop containing nucleotide triphosphate hydrolases"/>
    <property type="match status" value="1"/>
</dbReference>
<dbReference type="Gene3D" id="2.40.30.10">
    <property type="entry name" value="Translation factors"/>
    <property type="match status" value="2"/>
</dbReference>
<dbReference type="HAMAP" id="MF_00118_B">
    <property type="entry name" value="EF_Tu_B"/>
    <property type="match status" value="1"/>
</dbReference>
<dbReference type="InterPro" id="IPR041709">
    <property type="entry name" value="EF-Tu_GTP-bd"/>
</dbReference>
<dbReference type="InterPro" id="IPR050055">
    <property type="entry name" value="EF-Tu_GTPase"/>
</dbReference>
<dbReference type="InterPro" id="IPR004161">
    <property type="entry name" value="EFTu-like_2"/>
</dbReference>
<dbReference type="InterPro" id="IPR033720">
    <property type="entry name" value="EFTU_2"/>
</dbReference>
<dbReference type="InterPro" id="IPR031157">
    <property type="entry name" value="G_TR_CS"/>
</dbReference>
<dbReference type="InterPro" id="IPR027417">
    <property type="entry name" value="P-loop_NTPase"/>
</dbReference>
<dbReference type="InterPro" id="IPR005225">
    <property type="entry name" value="Small_GTP-bd"/>
</dbReference>
<dbReference type="InterPro" id="IPR000795">
    <property type="entry name" value="T_Tr_GTP-bd_dom"/>
</dbReference>
<dbReference type="InterPro" id="IPR009000">
    <property type="entry name" value="Transl_B-barrel_sf"/>
</dbReference>
<dbReference type="InterPro" id="IPR009001">
    <property type="entry name" value="Transl_elong_EF1A/Init_IF2_C"/>
</dbReference>
<dbReference type="InterPro" id="IPR004541">
    <property type="entry name" value="Transl_elong_EFTu/EF1A_bac/org"/>
</dbReference>
<dbReference type="InterPro" id="IPR004160">
    <property type="entry name" value="Transl_elong_EFTu/EF1A_C"/>
</dbReference>
<dbReference type="NCBIfam" id="TIGR00485">
    <property type="entry name" value="EF-Tu"/>
    <property type="match status" value="1"/>
</dbReference>
<dbReference type="NCBIfam" id="NF000766">
    <property type="entry name" value="PRK00049.1"/>
    <property type="match status" value="1"/>
</dbReference>
<dbReference type="NCBIfam" id="NF009372">
    <property type="entry name" value="PRK12735.1"/>
    <property type="match status" value="1"/>
</dbReference>
<dbReference type="NCBIfam" id="NF009373">
    <property type="entry name" value="PRK12736.1"/>
    <property type="match status" value="1"/>
</dbReference>
<dbReference type="NCBIfam" id="TIGR00231">
    <property type="entry name" value="small_GTP"/>
    <property type="match status" value="1"/>
</dbReference>
<dbReference type="PANTHER" id="PTHR43721:SF22">
    <property type="entry name" value="ELONGATION FACTOR TU, MITOCHONDRIAL"/>
    <property type="match status" value="1"/>
</dbReference>
<dbReference type="PANTHER" id="PTHR43721">
    <property type="entry name" value="ELONGATION FACTOR TU-RELATED"/>
    <property type="match status" value="1"/>
</dbReference>
<dbReference type="Pfam" id="PF00009">
    <property type="entry name" value="GTP_EFTU"/>
    <property type="match status" value="1"/>
</dbReference>
<dbReference type="Pfam" id="PF03144">
    <property type="entry name" value="GTP_EFTU_D2"/>
    <property type="match status" value="1"/>
</dbReference>
<dbReference type="Pfam" id="PF03143">
    <property type="entry name" value="GTP_EFTU_D3"/>
    <property type="match status" value="1"/>
</dbReference>
<dbReference type="PRINTS" id="PR00315">
    <property type="entry name" value="ELONGATNFCT"/>
</dbReference>
<dbReference type="SUPFAM" id="SSF50465">
    <property type="entry name" value="EF-Tu/eEF-1alpha/eIF2-gamma C-terminal domain"/>
    <property type="match status" value="1"/>
</dbReference>
<dbReference type="SUPFAM" id="SSF52540">
    <property type="entry name" value="P-loop containing nucleoside triphosphate hydrolases"/>
    <property type="match status" value="1"/>
</dbReference>
<dbReference type="SUPFAM" id="SSF50447">
    <property type="entry name" value="Translation proteins"/>
    <property type="match status" value="1"/>
</dbReference>
<dbReference type="PROSITE" id="PS00301">
    <property type="entry name" value="G_TR_1"/>
    <property type="match status" value="1"/>
</dbReference>
<dbReference type="PROSITE" id="PS51722">
    <property type="entry name" value="G_TR_2"/>
    <property type="match status" value="1"/>
</dbReference>
<keyword id="KW-0963">Cytoplasm</keyword>
<keyword id="KW-0251">Elongation factor</keyword>
<keyword id="KW-0342">GTP-binding</keyword>
<keyword id="KW-0378">Hydrolase</keyword>
<keyword id="KW-0460">Magnesium</keyword>
<keyword id="KW-0479">Metal-binding</keyword>
<keyword id="KW-0547">Nucleotide-binding</keyword>
<keyword id="KW-0648">Protein biosynthesis</keyword>
<reference key="1">
    <citation type="journal article" date="2007" name="DNA Res.">
        <title>Complete genomic structure of the bloom-forming toxic cyanobacterium Microcystis aeruginosa NIES-843.</title>
        <authorList>
            <person name="Kaneko T."/>
            <person name="Nakajima N."/>
            <person name="Okamoto S."/>
            <person name="Suzuki I."/>
            <person name="Tanabe Y."/>
            <person name="Tamaoki M."/>
            <person name="Nakamura Y."/>
            <person name="Kasai F."/>
            <person name="Watanabe A."/>
            <person name="Kawashima K."/>
            <person name="Kishida Y."/>
            <person name="Ono A."/>
            <person name="Shimizu Y."/>
            <person name="Takahashi C."/>
            <person name="Minami C."/>
            <person name="Fujishiro T."/>
            <person name="Kohara M."/>
            <person name="Katoh M."/>
            <person name="Nakazaki N."/>
            <person name="Nakayama S."/>
            <person name="Yamada M."/>
            <person name="Tabata S."/>
            <person name="Watanabe M.M."/>
        </authorList>
    </citation>
    <scope>NUCLEOTIDE SEQUENCE [LARGE SCALE GENOMIC DNA]</scope>
    <source>
        <strain>NIES-843 / IAM M-247</strain>
    </source>
</reference>
<evidence type="ECO:0000250" key="1"/>
<evidence type="ECO:0000255" key="2">
    <source>
        <dbReference type="HAMAP-Rule" id="MF_00118"/>
    </source>
</evidence>
<feature type="chain" id="PRO_1000076103" description="Elongation factor Tu">
    <location>
        <begin position="1"/>
        <end position="409"/>
    </location>
</feature>
<feature type="domain" description="tr-type G">
    <location>
        <begin position="10"/>
        <end position="214"/>
    </location>
</feature>
<feature type="region of interest" description="G1" evidence="1">
    <location>
        <begin position="19"/>
        <end position="26"/>
    </location>
</feature>
<feature type="region of interest" description="G2" evidence="1">
    <location>
        <begin position="60"/>
        <end position="64"/>
    </location>
</feature>
<feature type="region of interest" description="G3" evidence="1">
    <location>
        <begin position="81"/>
        <end position="84"/>
    </location>
</feature>
<feature type="region of interest" description="G4" evidence="1">
    <location>
        <begin position="136"/>
        <end position="139"/>
    </location>
</feature>
<feature type="region of interest" description="G5" evidence="1">
    <location>
        <begin position="174"/>
        <end position="176"/>
    </location>
</feature>
<feature type="binding site" evidence="2">
    <location>
        <begin position="19"/>
        <end position="26"/>
    </location>
    <ligand>
        <name>GTP</name>
        <dbReference type="ChEBI" id="CHEBI:37565"/>
    </ligand>
</feature>
<feature type="binding site" evidence="2">
    <location>
        <position position="26"/>
    </location>
    <ligand>
        <name>Mg(2+)</name>
        <dbReference type="ChEBI" id="CHEBI:18420"/>
    </ligand>
</feature>
<feature type="binding site" evidence="2">
    <location>
        <begin position="81"/>
        <end position="85"/>
    </location>
    <ligand>
        <name>GTP</name>
        <dbReference type="ChEBI" id="CHEBI:37565"/>
    </ligand>
</feature>
<feature type="binding site" evidence="2">
    <location>
        <begin position="136"/>
        <end position="139"/>
    </location>
    <ligand>
        <name>GTP</name>
        <dbReference type="ChEBI" id="CHEBI:37565"/>
    </ligand>
</feature>
<name>EFTU_MICAN</name>
<protein>
    <recommendedName>
        <fullName evidence="2">Elongation factor Tu</fullName>
        <shortName evidence="2">EF-Tu</shortName>
        <ecNumber evidence="2">3.6.5.3</ecNumber>
    </recommendedName>
</protein>
<accession>B0JSE0</accession>
<sequence length="409" mass="44918">MARAKFERTKPHVNIGTIGHVDHGKTTLTAAITMTLAALGNAQAKKYDEIDAAPEEKARGITINTAHVEYETASRHYAHVDCPGHADYVKNMITGAAQMDGGILVVSAADGPMPQTREHILLARQVGVPNLVVFLNKKDMVDDEELLELVELEVRELLTNYDFAGDDIPIIAGSAKEALEYMTKNPKAQKGDNEWVDAIYELMEAVDSYIPTPERDIDKPFLMAVEDVFSITGRGTVATGRIERGIVKVGDNVELVGIRETRPTTVTGIEMFKKSLDQGMAGDNAGILLRGIQKTDIERGMVIAKPGTIKPHTQFEGEVYVLSKEEGGRHTPFFKNYRPQFYVRTTDVTGTIQDYTADDGSTVEMVMPGDRIKMTVELINPIAIEQGMRFAIREGGRTIGSGVISKIIK</sequence>
<organism>
    <name type="scientific">Microcystis aeruginosa (strain NIES-843 / IAM M-2473)</name>
    <dbReference type="NCBI Taxonomy" id="449447"/>
    <lineage>
        <taxon>Bacteria</taxon>
        <taxon>Bacillati</taxon>
        <taxon>Cyanobacteriota</taxon>
        <taxon>Cyanophyceae</taxon>
        <taxon>Oscillatoriophycideae</taxon>
        <taxon>Chroococcales</taxon>
        <taxon>Microcystaceae</taxon>
        <taxon>Microcystis</taxon>
    </lineage>
</organism>